<name>Y605_CUPNH</name>
<organism>
    <name type="scientific">Cupriavidus necator (strain ATCC 17699 / DSM 428 / KCTC 22496 / NCIMB 10442 / H16 / Stanier 337)</name>
    <name type="common">Ralstonia eutropha</name>
    <dbReference type="NCBI Taxonomy" id="381666"/>
    <lineage>
        <taxon>Bacteria</taxon>
        <taxon>Pseudomonadati</taxon>
        <taxon>Pseudomonadota</taxon>
        <taxon>Betaproteobacteria</taxon>
        <taxon>Burkholderiales</taxon>
        <taxon>Burkholderiaceae</taxon>
        <taxon>Cupriavidus</taxon>
    </lineage>
</organism>
<keyword id="KW-1185">Reference proteome</keyword>
<sequence>MDNRLLEILVCPLCKGKLEYDRAAQELICHADKLAYPIRDGIPVMLADEARQSVPGRAVNPDGPASGN</sequence>
<accession>Q0KE18</accession>
<proteinExistence type="inferred from homology"/>
<gene>
    <name type="ordered locus">H16_A0605</name>
</gene>
<protein>
    <recommendedName>
        <fullName evidence="1">UPF0434 protein H16_A0605</fullName>
    </recommendedName>
</protein>
<feature type="chain" id="PRO_0000291140" description="UPF0434 protein H16_A0605">
    <location>
        <begin position="1"/>
        <end position="68"/>
    </location>
</feature>
<evidence type="ECO:0000255" key="1">
    <source>
        <dbReference type="HAMAP-Rule" id="MF_01187"/>
    </source>
</evidence>
<reference key="1">
    <citation type="journal article" date="2006" name="Nat. Biotechnol.">
        <title>Genome sequence of the bioplastic-producing 'Knallgas' bacterium Ralstonia eutropha H16.</title>
        <authorList>
            <person name="Pohlmann A."/>
            <person name="Fricke W.F."/>
            <person name="Reinecke F."/>
            <person name="Kusian B."/>
            <person name="Liesegang H."/>
            <person name="Cramm R."/>
            <person name="Eitinger T."/>
            <person name="Ewering C."/>
            <person name="Poetter M."/>
            <person name="Schwartz E."/>
            <person name="Strittmatter A."/>
            <person name="Voss I."/>
            <person name="Gottschalk G."/>
            <person name="Steinbuechel A."/>
            <person name="Friedrich B."/>
            <person name="Bowien B."/>
        </authorList>
    </citation>
    <scope>NUCLEOTIDE SEQUENCE [LARGE SCALE GENOMIC DNA]</scope>
    <source>
        <strain>ATCC 17699 / DSM 428 / KCTC 22496 / NCIMB 10442 / H16 / Stanier 337</strain>
    </source>
</reference>
<comment type="similarity">
    <text evidence="1">Belongs to the UPF0434 family.</text>
</comment>
<dbReference type="EMBL" id="AM260479">
    <property type="protein sequence ID" value="CAJ91753.1"/>
    <property type="molecule type" value="Genomic_DNA"/>
</dbReference>
<dbReference type="RefSeq" id="WP_010812255.1">
    <property type="nucleotide sequence ID" value="NZ_CP039287.1"/>
</dbReference>
<dbReference type="SMR" id="Q0KE18"/>
<dbReference type="STRING" id="381666.H16_A0605"/>
<dbReference type="KEGG" id="reh:H16_A0605"/>
<dbReference type="eggNOG" id="COG2835">
    <property type="taxonomic scope" value="Bacteria"/>
</dbReference>
<dbReference type="HOGENOM" id="CLU_155659_3_0_4"/>
<dbReference type="OrthoDB" id="9812205at2"/>
<dbReference type="Proteomes" id="UP000008210">
    <property type="component" value="Chromosome 1"/>
</dbReference>
<dbReference type="GO" id="GO:0005829">
    <property type="term" value="C:cytosol"/>
    <property type="evidence" value="ECO:0007669"/>
    <property type="project" value="TreeGrafter"/>
</dbReference>
<dbReference type="FunFam" id="2.20.25.10:FF:000002">
    <property type="entry name" value="UPF0434 protein YcaR"/>
    <property type="match status" value="1"/>
</dbReference>
<dbReference type="Gene3D" id="2.20.25.10">
    <property type="match status" value="1"/>
</dbReference>
<dbReference type="HAMAP" id="MF_01187">
    <property type="entry name" value="UPF0434"/>
    <property type="match status" value="1"/>
</dbReference>
<dbReference type="InterPro" id="IPR005651">
    <property type="entry name" value="Trm112-like"/>
</dbReference>
<dbReference type="PANTHER" id="PTHR33505:SF4">
    <property type="entry name" value="PROTEIN PREY, MITOCHONDRIAL"/>
    <property type="match status" value="1"/>
</dbReference>
<dbReference type="PANTHER" id="PTHR33505">
    <property type="entry name" value="ZGC:162634"/>
    <property type="match status" value="1"/>
</dbReference>
<dbReference type="Pfam" id="PF03966">
    <property type="entry name" value="Trm112p"/>
    <property type="match status" value="1"/>
</dbReference>
<dbReference type="SUPFAM" id="SSF158997">
    <property type="entry name" value="Trm112p-like"/>
    <property type="match status" value="1"/>
</dbReference>